<dbReference type="EMBL" id="CP000361">
    <property type="protein sequence ID" value="ABV67847.1"/>
    <property type="molecule type" value="Genomic_DNA"/>
</dbReference>
<dbReference type="RefSeq" id="WP_012147589.1">
    <property type="nucleotide sequence ID" value="NC_009850.1"/>
</dbReference>
<dbReference type="SMR" id="A8EV74"/>
<dbReference type="STRING" id="367737.Abu_1599"/>
<dbReference type="GeneID" id="24304145"/>
<dbReference type="KEGG" id="abu:Abu_1599"/>
<dbReference type="eggNOG" id="COG0711">
    <property type="taxonomic scope" value="Bacteria"/>
</dbReference>
<dbReference type="HOGENOM" id="CLU_129781_0_0_7"/>
<dbReference type="Proteomes" id="UP000001136">
    <property type="component" value="Chromosome"/>
</dbReference>
<dbReference type="GO" id="GO:0005886">
    <property type="term" value="C:plasma membrane"/>
    <property type="evidence" value="ECO:0007669"/>
    <property type="project" value="UniProtKB-SubCell"/>
</dbReference>
<dbReference type="GO" id="GO:0045259">
    <property type="term" value="C:proton-transporting ATP synthase complex"/>
    <property type="evidence" value="ECO:0007669"/>
    <property type="project" value="UniProtKB-KW"/>
</dbReference>
<dbReference type="GO" id="GO:0046933">
    <property type="term" value="F:proton-transporting ATP synthase activity, rotational mechanism"/>
    <property type="evidence" value="ECO:0007669"/>
    <property type="project" value="UniProtKB-UniRule"/>
</dbReference>
<dbReference type="CDD" id="cd06503">
    <property type="entry name" value="ATP-synt_Fo_b"/>
    <property type="match status" value="1"/>
</dbReference>
<dbReference type="HAMAP" id="MF_01398">
    <property type="entry name" value="ATP_synth_b_bprime"/>
    <property type="match status" value="1"/>
</dbReference>
<dbReference type="InterPro" id="IPR002146">
    <property type="entry name" value="ATP_synth_b/b'su_bac/chlpt"/>
</dbReference>
<dbReference type="NCBIfam" id="NF006292">
    <property type="entry name" value="PRK08475.1"/>
    <property type="match status" value="1"/>
</dbReference>
<dbReference type="Pfam" id="PF00430">
    <property type="entry name" value="ATP-synt_B"/>
    <property type="match status" value="1"/>
</dbReference>
<name>ATPF_ALIB4</name>
<evidence type="ECO:0000255" key="1">
    <source>
        <dbReference type="HAMAP-Rule" id="MF_01398"/>
    </source>
</evidence>
<reference key="1">
    <citation type="journal article" date="2007" name="PLoS ONE">
        <title>The complete genome sequence and analysis of the Epsilonproteobacterium Arcobacter butzleri.</title>
        <authorList>
            <person name="Miller W.G."/>
            <person name="Parker C.T."/>
            <person name="Rubenfield M."/>
            <person name="Mendz G.L."/>
            <person name="Woesten M.M.S.M."/>
            <person name="Ussery D.W."/>
            <person name="Stolz J.F."/>
            <person name="Binnewies T.T."/>
            <person name="Hallin P.F."/>
            <person name="Wang G."/>
            <person name="Malek J.A."/>
            <person name="Rogosin A."/>
            <person name="Stanker L.H."/>
            <person name="Mandrell R.E."/>
        </authorList>
    </citation>
    <scope>NUCLEOTIDE SEQUENCE [LARGE SCALE GENOMIC DNA]</scope>
    <source>
        <strain>RM4018</strain>
    </source>
</reference>
<accession>A8EV74</accession>
<protein>
    <recommendedName>
        <fullName evidence="1">ATP synthase subunit b</fullName>
    </recommendedName>
    <alternativeName>
        <fullName evidence="1">ATP synthase F(0) sector subunit b</fullName>
    </alternativeName>
    <alternativeName>
        <fullName evidence="1">ATPase subunit I</fullName>
    </alternativeName>
    <alternativeName>
        <fullName evidence="1">F-type ATPase subunit b</fullName>
        <shortName evidence="1">F-ATPase subunit b</shortName>
    </alternativeName>
</protein>
<proteinExistence type="inferred from homology"/>
<organism>
    <name type="scientific">Aliarcobacter butzleri (strain RM4018)</name>
    <name type="common">Arcobacter butzleri</name>
    <dbReference type="NCBI Taxonomy" id="367737"/>
    <lineage>
        <taxon>Bacteria</taxon>
        <taxon>Pseudomonadati</taxon>
        <taxon>Campylobacterota</taxon>
        <taxon>Epsilonproteobacteria</taxon>
        <taxon>Campylobacterales</taxon>
        <taxon>Arcobacteraceae</taxon>
        <taxon>Aliarcobacter</taxon>
    </lineage>
</organism>
<gene>
    <name evidence="1" type="primary">atpF</name>
    <name type="ordered locus">Abu_1599</name>
</gene>
<keyword id="KW-0066">ATP synthesis</keyword>
<keyword id="KW-0997">Cell inner membrane</keyword>
<keyword id="KW-1003">Cell membrane</keyword>
<keyword id="KW-0138">CF(0)</keyword>
<keyword id="KW-0375">Hydrogen ion transport</keyword>
<keyword id="KW-0406">Ion transport</keyword>
<keyword id="KW-0472">Membrane</keyword>
<keyword id="KW-1185">Reference proteome</keyword>
<keyword id="KW-0812">Transmembrane</keyword>
<keyword id="KW-1133">Transmembrane helix</keyword>
<keyword id="KW-0813">Transport</keyword>
<sequence length="170" mass="18897">MKRILLLGLALAPVALFASQGAVETDIVQRTVNFIIFAAILWYLLADKIKAFFANRTLSIQAELDKVQETLKASQDKVTDAQKKLEEARKLAAEIIESAKTDIDSVKQKVTTAVDADITNLNRNLEEMMKIETSKAKKQVVAEVLEELLSSENIKLTQQELVDVVLKKVA</sequence>
<comment type="function">
    <text evidence="1">F(1)F(0) ATP synthase produces ATP from ADP in the presence of a proton or sodium gradient. F-type ATPases consist of two structural domains, F(1) containing the extramembraneous catalytic core and F(0) containing the membrane proton channel, linked together by a central stalk and a peripheral stalk. During catalysis, ATP synthesis in the catalytic domain of F(1) is coupled via a rotary mechanism of the central stalk subunits to proton translocation.</text>
</comment>
<comment type="function">
    <text evidence="1">Component of the F(0) channel, it forms part of the peripheral stalk, linking F(1) to F(0).</text>
</comment>
<comment type="subunit">
    <text evidence="1">F-type ATPases have 2 components, F(1) - the catalytic core - and F(0) - the membrane proton channel. F(1) has five subunits: alpha(3), beta(3), gamma(1), delta(1), epsilon(1). F(0) has three main subunits: a(1), b(2) and c(10-14). The alpha and beta chains form an alternating ring which encloses part of the gamma chain. F(1) is attached to F(0) by a central stalk formed by the gamma and epsilon chains, while a peripheral stalk is formed by the delta and b chains.</text>
</comment>
<comment type="subcellular location">
    <subcellularLocation>
        <location evidence="1">Cell inner membrane</location>
        <topology evidence="1">Single-pass membrane protein</topology>
    </subcellularLocation>
</comment>
<comment type="similarity">
    <text evidence="1">Belongs to the ATPase B chain family.</text>
</comment>
<feature type="chain" id="PRO_0000368314" description="ATP synthase subunit b">
    <location>
        <begin position="1"/>
        <end position="170"/>
    </location>
</feature>
<feature type="transmembrane region" description="Helical" evidence="1">
    <location>
        <begin position="4"/>
        <end position="24"/>
    </location>
</feature>